<name>PSBI_ILLOL</name>
<evidence type="ECO:0000255" key="1">
    <source>
        <dbReference type="HAMAP-Rule" id="MF_01316"/>
    </source>
</evidence>
<dbReference type="EMBL" id="EF380354">
    <property type="protein sequence ID" value="ABQ52503.1"/>
    <property type="molecule type" value="Genomic_DNA"/>
</dbReference>
<dbReference type="RefSeq" id="YP_001294254.1">
    <property type="nucleotide sequence ID" value="NC_009600.1"/>
</dbReference>
<dbReference type="SMR" id="A6MMS8"/>
<dbReference type="GeneID" id="5236816"/>
<dbReference type="GO" id="GO:0009535">
    <property type="term" value="C:chloroplast thylakoid membrane"/>
    <property type="evidence" value="ECO:0007669"/>
    <property type="project" value="UniProtKB-SubCell"/>
</dbReference>
<dbReference type="GO" id="GO:0009539">
    <property type="term" value="C:photosystem II reaction center"/>
    <property type="evidence" value="ECO:0007669"/>
    <property type="project" value="InterPro"/>
</dbReference>
<dbReference type="GO" id="GO:0015979">
    <property type="term" value="P:photosynthesis"/>
    <property type="evidence" value="ECO:0007669"/>
    <property type="project" value="UniProtKB-UniRule"/>
</dbReference>
<dbReference type="HAMAP" id="MF_01316">
    <property type="entry name" value="PSII_PsbI"/>
    <property type="match status" value="1"/>
</dbReference>
<dbReference type="InterPro" id="IPR003686">
    <property type="entry name" value="PSII_PsbI"/>
</dbReference>
<dbReference type="InterPro" id="IPR037271">
    <property type="entry name" value="PSII_PsbI_sf"/>
</dbReference>
<dbReference type="NCBIfam" id="NF002735">
    <property type="entry name" value="PRK02655.1"/>
    <property type="match status" value="1"/>
</dbReference>
<dbReference type="PANTHER" id="PTHR35772">
    <property type="entry name" value="PHOTOSYSTEM II REACTION CENTER PROTEIN I"/>
    <property type="match status" value="1"/>
</dbReference>
<dbReference type="PANTHER" id="PTHR35772:SF1">
    <property type="entry name" value="PHOTOSYSTEM II REACTION CENTER PROTEIN I"/>
    <property type="match status" value="1"/>
</dbReference>
<dbReference type="Pfam" id="PF02532">
    <property type="entry name" value="PsbI"/>
    <property type="match status" value="1"/>
</dbReference>
<dbReference type="SUPFAM" id="SSF161041">
    <property type="entry name" value="Photosystem II reaction center protein I, PsbI"/>
    <property type="match status" value="1"/>
</dbReference>
<sequence>MLTLKLFVYTVVIFFVSLFIFGFLSNDPGRNPGREEEE</sequence>
<accession>A6MMS8</accession>
<proteinExistence type="inferred from homology"/>
<protein>
    <recommendedName>
        <fullName evidence="1">Photosystem II reaction center protein I</fullName>
        <shortName evidence="1">PSII-I</shortName>
    </recommendedName>
    <alternativeName>
        <fullName evidence="1">PSII 4.8 kDa protein</fullName>
    </alternativeName>
</protein>
<geneLocation type="chloroplast"/>
<feature type="chain" id="PRO_0000353233" description="Photosystem II reaction center protein I">
    <location>
        <begin position="1"/>
        <end position="38"/>
    </location>
</feature>
<feature type="transmembrane region" description="Helical" evidence="1">
    <location>
        <begin position="4"/>
        <end position="24"/>
    </location>
</feature>
<organism>
    <name type="scientific">Illicium oligandrum</name>
    <name type="common">Star anise</name>
    <dbReference type="NCBI Taxonomy" id="145286"/>
    <lineage>
        <taxon>Eukaryota</taxon>
        <taxon>Viridiplantae</taxon>
        <taxon>Streptophyta</taxon>
        <taxon>Embryophyta</taxon>
        <taxon>Tracheophyta</taxon>
        <taxon>Spermatophyta</taxon>
        <taxon>Magnoliopsida</taxon>
        <taxon>Austrobaileyales</taxon>
        <taxon>Schisandraceae</taxon>
        <taxon>Illicium</taxon>
    </lineage>
</organism>
<gene>
    <name evidence="1" type="primary">psbI</name>
</gene>
<reference key="1">
    <citation type="journal article" date="2007" name="Mol. Phylogenet. Evol.">
        <title>Phylogenetic and evolutionary implications of complete chloroplast genome sequences of four early-diverging angiosperms: Buxus (Buxaceae), Chloranthus (Chloranthaceae), Dioscorea (Dioscoreaceae), and Illicium (Schisandraceae).</title>
        <authorList>
            <person name="Hansen D.R."/>
            <person name="Dastidar S.G."/>
            <person name="Cai Z."/>
            <person name="Penaflor C."/>
            <person name="Kuehl J.V."/>
            <person name="Boore J.L."/>
            <person name="Jansen R.K."/>
        </authorList>
    </citation>
    <scope>NUCLEOTIDE SEQUENCE [LARGE SCALE GENOMIC DNA]</scope>
</reference>
<comment type="function">
    <text evidence="1">One of the components of the core complex of photosystem II (PSII), required for its stability and/or assembly. PSII is a light-driven water:plastoquinone oxidoreductase that uses light energy to abstract electrons from H(2)O, generating O(2) and a proton gradient subsequently used for ATP formation. It consists of a core antenna complex that captures photons, and an electron transfer chain that converts photonic excitation into a charge separation.</text>
</comment>
<comment type="subunit">
    <text evidence="1">PSII is composed of 1 copy each of membrane proteins PsbA, PsbB, PsbC, PsbD, PsbE, PsbF, PsbH, PsbI, PsbJ, PsbK, PsbL, PsbM, PsbT, PsbX, PsbY, PsbZ, Psb30/Ycf12, at least 3 peripheral proteins of the oxygen-evolving complex and a large number of cofactors. It forms dimeric complexes.</text>
</comment>
<comment type="subcellular location">
    <subcellularLocation>
        <location evidence="1">Plastid</location>
        <location evidence="1">Chloroplast thylakoid membrane</location>
        <topology evidence="1">Single-pass membrane protein</topology>
    </subcellularLocation>
</comment>
<comment type="similarity">
    <text evidence="1">Belongs to the PsbI family.</text>
</comment>
<keyword id="KW-0150">Chloroplast</keyword>
<keyword id="KW-0472">Membrane</keyword>
<keyword id="KW-0602">Photosynthesis</keyword>
<keyword id="KW-0604">Photosystem II</keyword>
<keyword id="KW-0934">Plastid</keyword>
<keyword id="KW-0674">Reaction center</keyword>
<keyword id="KW-0793">Thylakoid</keyword>
<keyword id="KW-0812">Transmembrane</keyword>
<keyword id="KW-1133">Transmembrane helix</keyword>